<feature type="chain" id="PRO_1000016993" description="Ribose-5-phosphate isomerase A">
    <location>
        <begin position="1"/>
        <end position="219"/>
    </location>
</feature>
<feature type="active site" description="Proton acceptor" evidence="1">
    <location>
        <position position="103"/>
    </location>
</feature>
<feature type="binding site" evidence="1">
    <location>
        <begin position="28"/>
        <end position="31"/>
    </location>
    <ligand>
        <name>substrate</name>
    </ligand>
</feature>
<feature type="binding site" evidence="1">
    <location>
        <begin position="81"/>
        <end position="84"/>
    </location>
    <ligand>
        <name>substrate</name>
    </ligand>
</feature>
<feature type="binding site" evidence="1">
    <location>
        <begin position="94"/>
        <end position="97"/>
    </location>
    <ligand>
        <name>substrate</name>
    </ligand>
</feature>
<feature type="binding site" evidence="1">
    <location>
        <position position="121"/>
    </location>
    <ligand>
        <name>substrate</name>
    </ligand>
</feature>
<proteinExistence type="inferred from homology"/>
<dbReference type="EC" id="5.3.1.6" evidence="1"/>
<dbReference type="EMBL" id="CP000469">
    <property type="protein sequence ID" value="ABK47213.1"/>
    <property type="molecule type" value="Genomic_DNA"/>
</dbReference>
<dbReference type="RefSeq" id="WP_011716104.1">
    <property type="nucleotide sequence ID" value="NC_008577.1"/>
</dbReference>
<dbReference type="SMR" id="A0KTU4"/>
<dbReference type="STRING" id="94122.Shewana3_0978"/>
<dbReference type="KEGG" id="shn:Shewana3_0978"/>
<dbReference type="eggNOG" id="COG0120">
    <property type="taxonomic scope" value="Bacteria"/>
</dbReference>
<dbReference type="HOGENOM" id="CLU_056590_1_1_6"/>
<dbReference type="OrthoDB" id="5870696at2"/>
<dbReference type="UniPathway" id="UPA00115">
    <property type="reaction ID" value="UER00412"/>
</dbReference>
<dbReference type="Proteomes" id="UP000002589">
    <property type="component" value="Chromosome"/>
</dbReference>
<dbReference type="GO" id="GO:0005829">
    <property type="term" value="C:cytosol"/>
    <property type="evidence" value="ECO:0007669"/>
    <property type="project" value="TreeGrafter"/>
</dbReference>
<dbReference type="GO" id="GO:0004751">
    <property type="term" value="F:ribose-5-phosphate isomerase activity"/>
    <property type="evidence" value="ECO:0007669"/>
    <property type="project" value="UniProtKB-UniRule"/>
</dbReference>
<dbReference type="GO" id="GO:0006014">
    <property type="term" value="P:D-ribose metabolic process"/>
    <property type="evidence" value="ECO:0007669"/>
    <property type="project" value="TreeGrafter"/>
</dbReference>
<dbReference type="GO" id="GO:0009052">
    <property type="term" value="P:pentose-phosphate shunt, non-oxidative branch"/>
    <property type="evidence" value="ECO:0007669"/>
    <property type="project" value="UniProtKB-UniRule"/>
</dbReference>
<dbReference type="CDD" id="cd01398">
    <property type="entry name" value="RPI_A"/>
    <property type="match status" value="1"/>
</dbReference>
<dbReference type="FunFam" id="3.30.70.260:FF:000004">
    <property type="entry name" value="Ribose-5-phosphate isomerase A"/>
    <property type="match status" value="1"/>
</dbReference>
<dbReference type="FunFam" id="3.40.50.1360:FF:000001">
    <property type="entry name" value="Ribose-5-phosphate isomerase A"/>
    <property type="match status" value="1"/>
</dbReference>
<dbReference type="Gene3D" id="3.30.70.260">
    <property type="match status" value="1"/>
</dbReference>
<dbReference type="Gene3D" id="3.40.50.1360">
    <property type="match status" value="1"/>
</dbReference>
<dbReference type="HAMAP" id="MF_00170">
    <property type="entry name" value="Rib_5P_isom_A"/>
    <property type="match status" value="1"/>
</dbReference>
<dbReference type="InterPro" id="IPR037171">
    <property type="entry name" value="NagB/RpiA_transferase-like"/>
</dbReference>
<dbReference type="InterPro" id="IPR020672">
    <property type="entry name" value="Ribose5P_isomerase_typA_subgr"/>
</dbReference>
<dbReference type="InterPro" id="IPR004788">
    <property type="entry name" value="Ribose5P_isomerase_type_A"/>
</dbReference>
<dbReference type="NCBIfam" id="NF001924">
    <property type="entry name" value="PRK00702.1"/>
    <property type="match status" value="1"/>
</dbReference>
<dbReference type="NCBIfam" id="TIGR00021">
    <property type="entry name" value="rpiA"/>
    <property type="match status" value="1"/>
</dbReference>
<dbReference type="PANTHER" id="PTHR11934">
    <property type="entry name" value="RIBOSE-5-PHOSPHATE ISOMERASE"/>
    <property type="match status" value="1"/>
</dbReference>
<dbReference type="PANTHER" id="PTHR11934:SF0">
    <property type="entry name" value="RIBOSE-5-PHOSPHATE ISOMERASE"/>
    <property type="match status" value="1"/>
</dbReference>
<dbReference type="Pfam" id="PF06026">
    <property type="entry name" value="Rib_5-P_isom_A"/>
    <property type="match status" value="1"/>
</dbReference>
<dbReference type="SUPFAM" id="SSF75445">
    <property type="entry name" value="D-ribose-5-phosphate isomerase (RpiA), lid domain"/>
    <property type="match status" value="1"/>
</dbReference>
<dbReference type="SUPFAM" id="SSF100950">
    <property type="entry name" value="NagB/RpiA/CoA transferase-like"/>
    <property type="match status" value="1"/>
</dbReference>
<reference key="1">
    <citation type="submission" date="2006-09" db="EMBL/GenBank/DDBJ databases">
        <title>Complete sequence of chromosome 1 of Shewanella sp. ANA-3.</title>
        <authorList>
            <person name="Copeland A."/>
            <person name="Lucas S."/>
            <person name="Lapidus A."/>
            <person name="Barry K."/>
            <person name="Detter J.C."/>
            <person name="Glavina del Rio T."/>
            <person name="Hammon N."/>
            <person name="Israni S."/>
            <person name="Dalin E."/>
            <person name="Tice H."/>
            <person name="Pitluck S."/>
            <person name="Chertkov O."/>
            <person name="Brettin T."/>
            <person name="Bruce D."/>
            <person name="Han C."/>
            <person name="Tapia R."/>
            <person name="Gilna P."/>
            <person name="Schmutz J."/>
            <person name="Larimer F."/>
            <person name="Land M."/>
            <person name="Hauser L."/>
            <person name="Kyrpides N."/>
            <person name="Kim E."/>
            <person name="Newman D."/>
            <person name="Salticov C."/>
            <person name="Konstantinidis K."/>
            <person name="Klappenback J."/>
            <person name="Tiedje J."/>
            <person name="Richardson P."/>
        </authorList>
    </citation>
    <scope>NUCLEOTIDE SEQUENCE [LARGE SCALE GENOMIC DNA]</scope>
    <source>
        <strain>ANA-3</strain>
    </source>
</reference>
<organism>
    <name type="scientific">Shewanella sp. (strain ANA-3)</name>
    <dbReference type="NCBI Taxonomy" id="94122"/>
    <lineage>
        <taxon>Bacteria</taxon>
        <taxon>Pseudomonadati</taxon>
        <taxon>Pseudomonadota</taxon>
        <taxon>Gammaproteobacteria</taxon>
        <taxon>Alteromonadales</taxon>
        <taxon>Shewanellaceae</taxon>
        <taxon>Shewanella</taxon>
    </lineage>
</organism>
<gene>
    <name evidence="1" type="primary">rpiA</name>
    <name type="ordered locus">Shewana3_0978</name>
</gene>
<accession>A0KTU4</accession>
<comment type="function">
    <text evidence="1">Catalyzes the reversible conversion of ribose-5-phosphate to ribulose 5-phosphate.</text>
</comment>
<comment type="catalytic activity">
    <reaction evidence="1">
        <text>aldehydo-D-ribose 5-phosphate = D-ribulose 5-phosphate</text>
        <dbReference type="Rhea" id="RHEA:14657"/>
        <dbReference type="ChEBI" id="CHEBI:58121"/>
        <dbReference type="ChEBI" id="CHEBI:58273"/>
        <dbReference type="EC" id="5.3.1.6"/>
    </reaction>
</comment>
<comment type="pathway">
    <text evidence="1">Carbohydrate degradation; pentose phosphate pathway; D-ribose 5-phosphate from D-ribulose 5-phosphate (non-oxidative stage): step 1/1.</text>
</comment>
<comment type="subunit">
    <text evidence="1">Homodimer.</text>
</comment>
<comment type="similarity">
    <text evidence="1">Belongs to the ribose 5-phosphate isomerase family.</text>
</comment>
<name>RPIA_SHESA</name>
<sequence length="219" mass="23312">MTQDEMKKAAGWAALKYVEKDSIVGVGTGSTVNHFIDALATMKADIEGAVSSSEASTQKMKALGIPVYDLNSVDKLSVYVDGADEINGHMDMIKGGGAALTREKIVAAVAEKFVCIVDNTKQVDILGKFPLPVEVIPMARSYVARELVKLGGDPVYREGVVTDNGNVILDVYNLKIINPKELEEKINAIVGVVTNGLFAKRGADVLLVGTPEGVKTFTA</sequence>
<protein>
    <recommendedName>
        <fullName evidence="1">Ribose-5-phosphate isomerase A</fullName>
        <ecNumber evidence="1">5.3.1.6</ecNumber>
    </recommendedName>
    <alternativeName>
        <fullName evidence="1">Phosphoriboisomerase A</fullName>
        <shortName evidence="1">PRI</shortName>
    </alternativeName>
</protein>
<keyword id="KW-0413">Isomerase</keyword>
<evidence type="ECO:0000255" key="1">
    <source>
        <dbReference type="HAMAP-Rule" id="MF_00170"/>
    </source>
</evidence>